<organism>
    <name type="scientific">Streptococcus mutans serotype c (strain ATCC 700610 / UA159)</name>
    <dbReference type="NCBI Taxonomy" id="210007"/>
    <lineage>
        <taxon>Bacteria</taxon>
        <taxon>Bacillati</taxon>
        <taxon>Bacillota</taxon>
        <taxon>Bacilli</taxon>
        <taxon>Lactobacillales</taxon>
        <taxon>Streptococcaceae</taxon>
        <taxon>Streptococcus</taxon>
    </lineage>
</organism>
<proteinExistence type="inferred from homology"/>
<gene>
    <name evidence="1" type="primary">rplT</name>
    <name type="ordered locus">SMU_699</name>
</gene>
<feature type="chain" id="PRO_0000177237" description="Large ribosomal subunit protein bL20">
    <location>
        <begin position="1"/>
        <end position="119"/>
    </location>
</feature>
<reference key="1">
    <citation type="journal article" date="2002" name="Proc. Natl. Acad. Sci. U.S.A.">
        <title>Genome sequence of Streptococcus mutans UA159, a cariogenic dental pathogen.</title>
        <authorList>
            <person name="Ajdic D.J."/>
            <person name="McShan W.M."/>
            <person name="McLaughlin R.E."/>
            <person name="Savic G."/>
            <person name="Chang J."/>
            <person name="Carson M.B."/>
            <person name="Primeaux C."/>
            <person name="Tian R."/>
            <person name="Kenton S."/>
            <person name="Jia H.G."/>
            <person name="Lin S.P."/>
            <person name="Qian Y."/>
            <person name="Li S."/>
            <person name="Zhu H."/>
            <person name="Najar F.Z."/>
            <person name="Lai H."/>
            <person name="White J."/>
            <person name="Roe B.A."/>
            <person name="Ferretti J.J."/>
        </authorList>
    </citation>
    <scope>NUCLEOTIDE SEQUENCE [LARGE SCALE GENOMIC DNA]</scope>
    <source>
        <strain>ATCC 700610 / UA159</strain>
    </source>
</reference>
<protein>
    <recommendedName>
        <fullName evidence="1">Large ribosomal subunit protein bL20</fullName>
    </recommendedName>
    <alternativeName>
        <fullName evidence="2">50S ribosomal protein L20</fullName>
    </alternativeName>
</protein>
<keyword id="KW-1185">Reference proteome</keyword>
<keyword id="KW-0687">Ribonucleoprotein</keyword>
<keyword id="KW-0689">Ribosomal protein</keyword>
<keyword id="KW-0694">RNA-binding</keyword>
<keyword id="KW-0699">rRNA-binding</keyword>
<comment type="function">
    <text evidence="1">Binds directly to 23S ribosomal RNA and is necessary for the in vitro assembly process of the 50S ribosomal subunit. It is not involved in the protein synthesizing functions of that subunit.</text>
</comment>
<comment type="similarity">
    <text evidence="1">Belongs to the bacterial ribosomal protein bL20 family.</text>
</comment>
<dbReference type="EMBL" id="AE014133">
    <property type="protein sequence ID" value="AAN58431.1"/>
    <property type="molecule type" value="Genomic_DNA"/>
</dbReference>
<dbReference type="RefSeq" id="NP_721125.1">
    <property type="nucleotide sequence ID" value="NC_004350.2"/>
</dbReference>
<dbReference type="RefSeq" id="WP_002263326.1">
    <property type="nucleotide sequence ID" value="NC_004350.2"/>
</dbReference>
<dbReference type="SMR" id="Q8DV20"/>
<dbReference type="STRING" id="210007.SMU_699"/>
<dbReference type="GeneID" id="93859748"/>
<dbReference type="KEGG" id="smu:SMU_699"/>
<dbReference type="PATRIC" id="fig|210007.7.peg.621"/>
<dbReference type="eggNOG" id="COG0292">
    <property type="taxonomic scope" value="Bacteria"/>
</dbReference>
<dbReference type="HOGENOM" id="CLU_123265_0_1_9"/>
<dbReference type="OrthoDB" id="9808966at2"/>
<dbReference type="PhylomeDB" id="Q8DV20"/>
<dbReference type="Proteomes" id="UP000002512">
    <property type="component" value="Chromosome"/>
</dbReference>
<dbReference type="GO" id="GO:1990904">
    <property type="term" value="C:ribonucleoprotein complex"/>
    <property type="evidence" value="ECO:0007669"/>
    <property type="project" value="UniProtKB-KW"/>
</dbReference>
<dbReference type="GO" id="GO:0005840">
    <property type="term" value="C:ribosome"/>
    <property type="evidence" value="ECO:0007669"/>
    <property type="project" value="UniProtKB-KW"/>
</dbReference>
<dbReference type="GO" id="GO:0019843">
    <property type="term" value="F:rRNA binding"/>
    <property type="evidence" value="ECO:0007669"/>
    <property type="project" value="UniProtKB-UniRule"/>
</dbReference>
<dbReference type="GO" id="GO:0003735">
    <property type="term" value="F:structural constituent of ribosome"/>
    <property type="evidence" value="ECO:0007669"/>
    <property type="project" value="InterPro"/>
</dbReference>
<dbReference type="GO" id="GO:0000027">
    <property type="term" value="P:ribosomal large subunit assembly"/>
    <property type="evidence" value="ECO:0007669"/>
    <property type="project" value="UniProtKB-UniRule"/>
</dbReference>
<dbReference type="GO" id="GO:0006412">
    <property type="term" value="P:translation"/>
    <property type="evidence" value="ECO:0007669"/>
    <property type="project" value="InterPro"/>
</dbReference>
<dbReference type="CDD" id="cd07026">
    <property type="entry name" value="Ribosomal_L20"/>
    <property type="match status" value="1"/>
</dbReference>
<dbReference type="FunFam" id="1.10.1900.20:FF:000001">
    <property type="entry name" value="50S ribosomal protein L20"/>
    <property type="match status" value="1"/>
</dbReference>
<dbReference type="Gene3D" id="6.10.160.10">
    <property type="match status" value="1"/>
</dbReference>
<dbReference type="Gene3D" id="1.10.1900.20">
    <property type="entry name" value="Ribosomal protein L20"/>
    <property type="match status" value="1"/>
</dbReference>
<dbReference type="HAMAP" id="MF_00382">
    <property type="entry name" value="Ribosomal_bL20"/>
    <property type="match status" value="1"/>
</dbReference>
<dbReference type="InterPro" id="IPR005813">
    <property type="entry name" value="Ribosomal_bL20"/>
</dbReference>
<dbReference type="InterPro" id="IPR049946">
    <property type="entry name" value="RIBOSOMAL_L20_CS"/>
</dbReference>
<dbReference type="InterPro" id="IPR035566">
    <property type="entry name" value="Ribosomal_protein_bL20_C"/>
</dbReference>
<dbReference type="NCBIfam" id="TIGR01032">
    <property type="entry name" value="rplT_bact"/>
    <property type="match status" value="1"/>
</dbReference>
<dbReference type="PANTHER" id="PTHR10986">
    <property type="entry name" value="39S RIBOSOMAL PROTEIN L20"/>
    <property type="match status" value="1"/>
</dbReference>
<dbReference type="Pfam" id="PF00453">
    <property type="entry name" value="Ribosomal_L20"/>
    <property type="match status" value="1"/>
</dbReference>
<dbReference type="PRINTS" id="PR00062">
    <property type="entry name" value="RIBOSOMALL20"/>
</dbReference>
<dbReference type="SUPFAM" id="SSF74731">
    <property type="entry name" value="Ribosomal protein L20"/>
    <property type="match status" value="1"/>
</dbReference>
<dbReference type="PROSITE" id="PS00937">
    <property type="entry name" value="RIBOSOMAL_L20"/>
    <property type="match status" value="1"/>
</dbReference>
<evidence type="ECO:0000255" key="1">
    <source>
        <dbReference type="HAMAP-Rule" id="MF_00382"/>
    </source>
</evidence>
<evidence type="ECO:0000305" key="2"/>
<accession>Q8DV20</accession>
<sequence length="119" mass="13751">MARVKGGVVSRKRRKRVLKLAKGYYGAKHILFRTAKEQVMNSYYYAYRDRRQRKRDFRKLWITRINAAARMNGLSYSQLMHGLKLAEVEVNRKMLADLAVNDAAAFTVLADAAKEKLGK</sequence>
<name>RL20_STRMU</name>